<sequence length="109" mass="12536">MLMNRFVLKRVRQGKPLNKPRLSIFCSHKHIYAQIIDDMVGRTLVSASTYHYKQGWHSTMKDAQEVGQKLAQQALEKGIQQVVLDRGSYRYHGKIRALAEAARKEGLKI</sequence>
<evidence type="ECO:0000250" key="1"/>
<evidence type="ECO:0000305" key="2"/>
<feature type="chain" id="PRO_0000131423" description="Large ribosomal subunit protein uL18c">
    <location>
        <begin position="1"/>
        <end position="109"/>
    </location>
</feature>
<protein>
    <recommendedName>
        <fullName evidence="2">Large ribosomal subunit protein uL18c</fullName>
    </recommendedName>
    <alternativeName>
        <fullName>50S ribosomal protein L18, chloroplastic</fullName>
    </alternativeName>
</protein>
<dbReference type="EMBL" id="AB002583">
    <property type="protein sequence ID" value="BAC76246.1"/>
    <property type="molecule type" value="Genomic_DNA"/>
</dbReference>
<dbReference type="RefSeq" id="NP_849084.1">
    <property type="nucleotide sequence ID" value="NC_004799.1"/>
</dbReference>
<dbReference type="SMR" id="Q85FU8"/>
<dbReference type="STRING" id="280699.Q85FU8"/>
<dbReference type="EnsemblPlants" id="CMV179CT">
    <property type="protein sequence ID" value="CMV179CT"/>
    <property type="gene ID" value="CMV179C"/>
</dbReference>
<dbReference type="GeneID" id="844973"/>
<dbReference type="Gramene" id="CMV179CT">
    <property type="protein sequence ID" value="CMV179CT"/>
    <property type="gene ID" value="CMV179C"/>
</dbReference>
<dbReference type="KEGG" id="cme:CymeCp152"/>
<dbReference type="eggNOG" id="KOG1870">
    <property type="taxonomic scope" value="Eukaryota"/>
</dbReference>
<dbReference type="HOGENOM" id="CLU_098841_0_1_1"/>
<dbReference type="Proteomes" id="UP000007014">
    <property type="component" value="Chloroplast"/>
</dbReference>
<dbReference type="GO" id="GO:0009507">
    <property type="term" value="C:chloroplast"/>
    <property type="evidence" value="ECO:0007669"/>
    <property type="project" value="UniProtKB-SubCell"/>
</dbReference>
<dbReference type="GO" id="GO:1990904">
    <property type="term" value="C:ribonucleoprotein complex"/>
    <property type="evidence" value="ECO:0007669"/>
    <property type="project" value="UniProtKB-KW"/>
</dbReference>
<dbReference type="GO" id="GO:0005840">
    <property type="term" value="C:ribosome"/>
    <property type="evidence" value="ECO:0007669"/>
    <property type="project" value="UniProtKB-KW"/>
</dbReference>
<dbReference type="GO" id="GO:0008097">
    <property type="term" value="F:5S rRNA binding"/>
    <property type="evidence" value="ECO:0007669"/>
    <property type="project" value="TreeGrafter"/>
</dbReference>
<dbReference type="GO" id="GO:0003735">
    <property type="term" value="F:structural constituent of ribosome"/>
    <property type="evidence" value="ECO:0007669"/>
    <property type="project" value="InterPro"/>
</dbReference>
<dbReference type="GO" id="GO:0006412">
    <property type="term" value="P:translation"/>
    <property type="evidence" value="ECO:0007669"/>
    <property type="project" value="UniProtKB-UniRule"/>
</dbReference>
<dbReference type="CDD" id="cd00432">
    <property type="entry name" value="Ribosomal_L18_L5e"/>
    <property type="match status" value="1"/>
</dbReference>
<dbReference type="Gene3D" id="3.30.420.100">
    <property type="match status" value="1"/>
</dbReference>
<dbReference type="HAMAP" id="MF_01337_B">
    <property type="entry name" value="Ribosomal_uL18_B"/>
    <property type="match status" value="1"/>
</dbReference>
<dbReference type="InterPro" id="IPR004389">
    <property type="entry name" value="Ribosomal_uL18_bac-type"/>
</dbReference>
<dbReference type="InterPro" id="IPR005484">
    <property type="entry name" value="Ribosomal_uL18_bac/euk"/>
</dbReference>
<dbReference type="NCBIfam" id="TIGR00060">
    <property type="entry name" value="L18_bact"/>
    <property type="match status" value="1"/>
</dbReference>
<dbReference type="PANTHER" id="PTHR12899">
    <property type="entry name" value="39S RIBOSOMAL PROTEIN L18, MITOCHONDRIAL"/>
    <property type="match status" value="1"/>
</dbReference>
<dbReference type="PANTHER" id="PTHR12899:SF3">
    <property type="entry name" value="LARGE RIBOSOMAL SUBUNIT PROTEIN UL18M"/>
    <property type="match status" value="1"/>
</dbReference>
<dbReference type="Pfam" id="PF00861">
    <property type="entry name" value="Ribosomal_L18p"/>
    <property type="match status" value="1"/>
</dbReference>
<dbReference type="SUPFAM" id="SSF53137">
    <property type="entry name" value="Translational machinery components"/>
    <property type="match status" value="1"/>
</dbReference>
<geneLocation type="chloroplast"/>
<name>RK18_CYAM1</name>
<gene>
    <name type="primary">rpl18</name>
</gene>
<accession>Q85FU8</accession>
<keyword id="KW-0150">Chloroplast</keyword>
<keyword id="KW-0934">Plastid</keyword>
<keyword id="KW-1185">Reference proteome</keyword>
<keyword id="KW-0687">Ribonucleoprotein</keyword>
<keyword id="KW-0689">Ribosomal protein</keyword>
<keyword id="KW-0694">RNA-binding</keyword>
<keyword id="KW-0699">rRNA-binding</keyword>
<organism>
    <name type="scientific">Cyanidioschyzon merolae (strain NIES-3377 / 10D)</name>
    <name type="common">Unicellular red alga</name>
    <dbReference type="NCBI Taxonomy" id="280699"/>
    <lineage>
        <taxon>Eukaryota</taxon>
        <taxon>Rhodophyta</taxon>
        <taxon>Bangiophyceae</taxon>
        <taxon>Cyanidiales</taxon>
        <taxon>Cyanidiaceae</taxon>
        <taxon>Cyanidioschyzon</taxon>
    </lineage>
</organism>
<reference key="1">
    <citation type="journal article" date="2003" name="DNA Res.">
        <title>Complete sequence and analysis of the plastid genome of the unicellular red alga Cyanidioschyzon merolae.</title>
        <authorList>
            <person name="Ohta N."/>
            <person name="Matsuzaki M."/>
            <person name="Misumi O."/>
            <person name="Miyagishima S.-Y."/>
            <person name="Nozaki H."/>
            <person name="Tanaka K."/>
            <person name="Shin-i T."/>
            <person name="Kohara Y."/>
            <person name="Kuroiwa T."/>
        </authorList>
    </citation>
    <scope>NUCLEOTIDE SEQUENCE [LARGE SCALE GENOMIC DNA]</scope>
    <source>
        <strain>NIES-3377 / 10D</strain>
    </source>
</reference>
<proteinExistence type="inferred from homology"/>
<comment type="function">
    <text evidence="1">Binds 5S rRNA, forms part of the central protuberance of the 50S subunit.</text>
</comment>
<comment type="subunit">
    <text evidence="1">Part of the 50S ribosomal subunit; contacts the 5S rRNA.</text>
</comment>
<comment type="subcellular location">
    <subcellularLocation>
        <location>Plastid</location>
        <location>Chloroplast</location>
    </subcellularLocation>
</comment>
<comment type="similarity">
    <text evidence="2">Belongs to the universal ribosomal protein uL18 family.</text>
</comment>